<protein>
    <recommendedName>
        <fullName>Cytochrome P450 26A1</fullName>
        <ecNumber evidence="3">1.14.13.-</ecNumber>
    </recommendedName>
    <alternativeName>
        <fullName>Cytochrome P450RAI</fullName>
    </alternativeName>
    <alternativeName>
        <fullName evidence="4">Retinoic acid 4-hydroxylase</fullName>
    </alternativeName>
    <alternativeName>
        <fullName>Retinoic acid-metabolizing cytochrome</fullName>
    </alternativeName>
</protein>
<keyword id="KW-0256">Endoplasmic reticulum</keyword>
<keyword id="KW-0349">Heme</keyword>
<keyword id="KW-0408">Iron</keyword>
<keyword id="KW-0443">Lipid metabolism</keyword>
<keyword id="KW-0472">Membrane</keyword>
<keyword id="KW-0479">Metal-binding</keyword>
<keyword id="KW-0492">Microsome</keyword>
<keyword id="KW-0503">Monooxygenase</keyword>
<keyword id="KW-0560">Oxidoreductase</keyword>
<keyword id="KW-1185">Reference proteome</keyword>
<gene>
    <name type="primary">cyp26a1</name>
    <name type="synonym">cyp26</name>
</gene>
<dbReference type="EC" id="1.14.13.-" evidence="3"/>
<dbReference type="EMBL" id="U68234">
    <property type="protein sequence ID" value="AAC60045.1"/>
    <property type="molecule type" value="mRNA"/>
</dbReference>
<dbReference type="SMR" id="P79739"/>
<dbReference type="FunCoup" id="P79739">
    <property type="interactions" value="250"/>
</dbReference>
<dbReference type="STRING" id="7955.ENSDARP00000041727"/>
<dbReference type="SwissLipids" id="SLP:000001673"/>
<dbReference type="PaxDb" id="7955-ENSDARP00000041727"/>
<dbReference type="AGR" id="ZFIN:ZDB-GENE-990415-44"/>
<dbReference type="ZFIN" id="ZDB-GENE-990415-44">
    <property type="gene designation" value="cyp26a1"/>
</dbReference>
<dbReference type="eggNOG" id="KOG0157">
    <property type="taxonomic scope" value="Eukaryota"/>
</dbReference>
<dbReference type="InParanoid" id="P79739"/>
<dbReference type="Reactome" id="R-DRE-211916">
    <property type="pathway name" value="Vitamins"/>
</dbReference>
<dbReference type="Reactome" id="R-DRE-5365859">
    <property type="pathway name" value="RA biosynthesis pathway"/>
</dbReference>
<dbReference type="PRO" id="PR:P79739"/>
<dbReference type="Proteomes" id="UP000000437">
    <property type="component" value="Unplaced"/>
</dbReference>
<dbReference type="GO" id="GO:0005789">
    <property type="term" value="C:endoplasmic reticulum membrane"/>
    <property type="evidence" value="ECO:0007669"/>
    <property type="project" value="UniProtKB-SubCell"/>
</dbReference>
<dbReference type="GO" id="GO:0062182">
    <property type="term" value="F:all-trans retinoic acid 4-hydrolase activity"/>
    <property type="evidence" value="ECO:0007669"/>
    <property type="project" value="RHEA"/>
</dbReference>
<dbReference type="GO" id="GO:0020037">
    <property type="term" value="F:heme binding"/>
    <property type="evidence" value="ECO:0007669"/>
    <property type="project" value="InterPro"/>
</dbReference>
<dbReference type="GO" id="GO:0005506">
    <property type="term" value="F:iron ion binding"/>
    <property type="evidence" value="ECO:0007669"/>
    <property type="project" value="InterPro"/>
</dbReference>
<dbReference type="GO" id="GO:0004497">
    <property type="term" value="F:monooxygenase activity"/>
    <property type="evidence" value="ECO:0000318"/>
    <property type="project" value="GO_Central"/>
</dbReference>
<dbReference type="GO" id="GO:0008401">
    <property type="term" value="F:retinoic acid 4-hydroxylase activity"/>
    <property type="evidence" value="ECO:0000314"/>
    <property type="project" value="ZFIN"/>
</dbReference>
<dbReference type="GO" id="GO:0034672">
    <property type="term" value="P:anterior/posterior pattern specification involved in pronephros development"/>
    <property type="evidence" value="ECO:0000315"/>
    <property type="project" value="ZFIN"/>
</dbReference>
<dbReference type="GO" id="GO:0055014">
    <property type="term" value="P:atrial cardiac muscle cell development"/>
    <property type="evidence" value="ECO:0000316"/>
    <property type="project" value="ZFIN"/>
</dbReference>
<dbReference type="GO" id="GO:0001568">
    <property type="term" value="P:blood vessel development"/>
    <property type="evidence" value="ECO:0000315"/>
    <property type="project" value="ZFIN"/>
</dbReference>
<dbReference type="GO" id="GO:0048854">
    <property type="term" value="P:brain morphogenesis"/>
    <property type="evidence" value="ECO:0000315"/>
    <property type="project" value="ZFIN"/>
</dbReference>
<dbReference type="GO" id="GO:0071299">
    <property type="term" value="P:cellular response to vitamin A"/>
    <property type="evidence" value="ECO:0000314"/>
    <property type="project" value="ZFIN"/>
</dbReference>
<dbReference type="GO" id="GO:0007417">
    <property type="term" value="P:central nervous system development"/>
    <property type="evidence" value="ECO:0000318"/>
    <property type="project" value="GO_Central"/>
</dbReference>
<dbReference type="GO" id="GO:0021797">
    <property type="term" value="P:forebrain anterior/posterior pattern specification"/>
    <property type="evidence" value="ECO:0000316"/>
    <property type="project" value="ZFIN"/>
</dbReference>
<dbReference type="GO" id="GO:0007507">
    <property type="term" value="P:heart development"/>
    <property type="evidence" value="ECO:0000315"/>
    <property type="project" value="ZFIN"/>
</dbReference>
<dbReference type="GO" id="GO:0030902">
    <property type="term" value="P:hindbrain development"/>
    <property type="evidence" value="ECO:0000315"/>
    <property type="project" value="ZFIN"/>
</dbReference>
<dbReference type="GO" id="GO:0003131">
    <property type="term" value="P:mesodermal-endodermal cell signaling"/>
    <property type="evidence" value="ECO:0000315"/>
    <property type="project" value="ZFIN"/>
</dbReference>
<dbReference type="GO" id="GO:0030917">
    <property type="term" value="P:midbrain-hindbrain boundary development"/>
    <property type="evidence" value="ECO:0000316"/>
    <property type="project" value="ZFIN"/>
</dbReference>
<dbReference type="GO" id="GO:0003151">
    <property type="term" value="P:outflow tract morphogenesis"/>
    <property type="evidence" value="ECO:0000316"/>
    <property type="project" value="ZFIN"/>
</dbReference>
<dbReference type="GO" id="GO:0031016">
    <property type="term" value="P:pancreas development"/>
    <property type="evidence" value="ECO:0000315"/>
    <property type="project" value="ZFIN"/>
</dbReference>
<dbReference type="GO" id="GO:0042574">
    <property type="term" value="P:retinal metabolic process"/>
    <property type="evidence" value="ECO:0000315"/>
    <property type="project" value="ZFIN"/>
</dbReference>
<dbReference type="GO" id="GO:0034653">
    <property type="term" value="P:retinoic acid catabolic process"/>
    <property type="evidence" value="ECO:0000315"/>
    <property type="project" value="ZFIN"/>
</dbReference>
<dbReference type="GO" id="GO:0042573">
    <property type="term" value="P:retinoic acid metabolic process"/>
    <property type="evidence" value="ECO:0000314"/>
    <property type="project" value="ZFIN"/>
</dbReference>
<dbReference type="GO" id="GO:0048384">
    <property type="term" value="P:retinoic acid receptor signaling pathway"/>
    <property type="evidence" value="ECO:0000315"/>
    <property type="project" value="ZFIN"/>
</dbReference>
<dbReference type="GO" id="GO:0021661">
    <property type="term" value="P:rhombomere 4 morphogenesis"/>
    <property type="evidence" value="ECO:0000315"/>
    <property type="project" value="ZFIN"/>
</dbReference>
<dbReference type="GO" id="GO:0001756">
    <property type="term" value="P:somitogenesis"/>
    <property type="evidence" value="ECO:0000315"/>
    <property type="project" value="ZFIN"/>
</dbReference>
<dbReference type="GO" id="GO:0001944">
    <property type="term" value="P:vasculature development"/>
    <property type="evidence" value="ECO:0000316"/>
    <property type="project" value="ZFIN"/>
</dbReference>
<dbReference type="FunFam" id="1.10.630.10:FF:000041">
    <property type="entry name" value="Cytochrome P450 26A1 isoform 1"/>
    <property type="match status" value="1"/>
</dbReference>
<dbReference type="Gene3D" id="1.10.630.10">
    <property type="entry name" value="Cytochrome P450"/>
    <property type="match status" value="1"/>
</dbReference>
<dbReference type="InterPro" id="IPR001128">
    <property type="entry name" value="Cyt_P450"/>
</dbReference>
<dbReference type="InterPro" id="IPR017972">
    <property type="entry name" value="Cyt_P450_CS"/>
</dbReference>
<dbReference type="InterPro" id="IPR002401">
    <property type="entry name" value="Cyt_P450_E_grp-I"/>
</dbReference>
<dbReference type="InterPro" id="IPR036396">
    <property type="entry name" value="Cyt_P450_sf"/>
</dbReference>
<dbReference type="PANTHER" id="PTHR24286">
    <property type="entry name" value="CYTOCHROME P450 26"/>
    <property type="match status" value="1"/>
</dbReference>
<dbReference type="PANTHER" id="PTHR24286:SF101">
    <property type="entry name" value="CYTOCHROME P450 26A1"/>
    <property type="match status" value="1"/>
</dbReference>
<dbReference type="Pfam" id="PF00067">
    <property type="entry name" value="p450"/>
    <property type="match status" value="1"/>
</dbReference>
<dbReference type="PRINTS" id="PR00463">
    <property type="entry name" value="EP450I"/>
</dbReference>
<dbReference type="PRINTS" id="PR00385">
    <property type="entry name" value="P450"/>
</dbReference>
<dbReference type="SUPFAM" id="SSF48264">
    <property type="entry name" value="Cytochrome P450"/>
    <property type="match status" value="1"/>
</dbReference>
<dbReference type="PROSITE" id="PS00086">
    <property type="entry name" value="CYTOCHROME_P450"/>
    <property type="match status" value="1"/>
</dbReference>
<proteinExistence type="evidence at protein level"/>
<reference key="1">
    <citation type="journal article" date="1996" name="J. Biol. Chem.">
        <title>Identification of the retinoic acid-inducible all-trans-retinoic acid 4-hydroxylase.</title>
        <authorList>
            <person name="White J.A."/>
            <person name="Guo Y.-D."/>
            <person name="Baetz K."/>
            <person name="Beckett-Jones B."/>
            <person name="Bonasoro J."/>
            <person name="Hsu K.E."/>
            <person name="Dilworth F.J."/>
            <person name="Jones G."/>
            <person name="Petkovich M."/>
        </authorList>
    </citation>
    <scope>NUCLEOTIDE SEQUENCE [MRNA]</scope>
    <scope>FUNCTION</scope>
    <scope>CATALYTIC ACTIVITY</scope>
    <scope>INDUCTION</scope>
</reference>
<comment type="function">
    <text evidence="2 3">A cytochrome P450 monooxygenase involved in the metabolism of all-trans retinoic acid (atRA), a signaling molecule that binds to retinoic acid receptors and regulates gene transcription (PubMed:8939936). Mechanistically, uses molecular oxygen inserting one oxygen atom into a substrate, and reducing the second into a water molecule, with two electrons provided by NADPH via cytochrome P450 reductase (CPR; NADPH-ferrihemoprotein reductase). Catalyzes the hydroxylation of carbon hydrogen bonds of atRA primarily at C-4 (PubMed:8939936). Has no activity toward 9-cis and 13-cis retinoic acid stereoisomers. May play a role in the oxidative metabolism of xenobiotics such as tazarotenic acid (By similarity).</text>
</comment>
<comment type="catalytic activity">
    <reaction evidence="3">
        <text>all-trans-retinoate + reduced [NADPH--hemoprotein reductase] + O2 = all-trans-(4S)-hydroxyretinoate + oxidized [NADPH--hemoprotein reductase] + H2O + H(+)</text>
        <dbReference type="Rhea" id="RHEA:51492"/>
        <dbReference type="Rhea" id="RHEA-COMP:11964"/>
        <dbReference type="Rhea" id="RHEA-COMP:11965"/>
        <dbReference type="ChEBI" id="CHEBI:15377"/>
        <dbReference type="ChEBI" id="CHEBI:15378"/>
        <dbReference type="ChEBI" id="CHEBI:15379"/>
        <dbReference type="ChEBI" id="CHEBI:35291"/>
        <dbReference type="ChEBI" id="CHEBI:57618"/>
        <dbReference type="ChEBI" id="CHEBI:58210"/>
        <dbReference type="ChEBI" id="CHEBI:134185"/>
    </reaction>
    <physiologicalReaction direction="left-to-right" evidence="6">
        <dbReference type="Rhea" id="RHEA:51493"/>
    </physiologicalReaction>
</comment>
<comment type="cofactor">
    <cofactor evidence="1">
        <name>heme</name>
        <dbReference type="ChEBI" id="CHEBI:30413"/>
    </cofactor>
</comment>
<comment type="subcellular location">
    <subcellularLocation>
        <location evidence="2">Endoplasmic reticulum membrane</location>
        <topology>Peripheral membrane protein</topology>
    </subcellularLocation>
    <subcellularLocation>
        <location evidence="2">Microsome membrane</location>
        <topology>Peripheral membrane protein</topology>
    </subcellularLocation>
</comment>
<comment type="induction">
    <text evidence="3">By retinoic acid.</text>
</comment>
<comment type="similarity">
    <text evidence="5">Belongs to the cytochrome P450 family.</text>
</comment>
<evidence type="ECO:0000250" key="1"/>
<evidence type="ECO:0000250" key="2">
    <source>
        <dbReference type="UniProtKB" id="O43174"/>
    </source>
</evidence>
<evidence type="ECO:0000269" key="3">
    <source>
    </source>
</evidence>
<evidence type="ECO:0000303" key="4">
    <source>
    </source>
</evidence>
<evidence type="ECO:0000305" key="5"/>
<evidence type="ECO:0000305" key="6">
    <source>
    </source>
</evidence>
<sequence length="492" mass="56281">MGLYTLMVTFLCTIVLPVLLFLAAVKLWEMLMIRRVDPNCRSPLPPGTMGLPFIGETLQLILQRRKFLRMKRQKYGCIYKTHLFGNPTVRVMGADNVRQILLGEHKLVSVQWPASVRTILGSDTLSNVHGVQHKNKKKAIMRAFSRDALEHYIPVIQQEVKSAIQEWLQKDSCVLVYPEMKKLMFRIAMRILLGFEPEQIKTDEQELVEAFEEMIKNLFSLPIDVPFSGLYRGLRARNFIHSKIEENIRKKIQDDDNENEQKYKDALQLLIENSRRSDEPFSLQAMKEAATELLFGGHETTASTATSLVMFLGLNTEVVQKVREEVQEKVEMGMYTPGKGLSMELLDQLKYTGCVIKETLRINPPVPGGFRVALKTFELNGYQIPKGWNVIYSICDTHDVADVFPNKEEFQPERFMSKGLEDGSRFNYIPFGGGSRMCVGKEFAKVLLKIFLVELTQHCNWILSNGPPTMKTGPTIYPVDNLPTKFTSYVRN</sequence>
<organism>
    <name type="scientific">Danio rerio</name>
    <name type="common">Zebrafish</name>
    <name type="synonym">Brachydanio rerio</name>
    <dbReference type="NCBI Taxonomy" id="7955"/>
    <lineage>
        <taxon>Eukaryota</taxon>
        <taxon>Metazoa</taxon>
        <taxon>Chordata</taxon>
        <taxon>Craniata</taxon>
        <taxon>Vertebrata</taxon>
        <taxon>Euteleostomi</taxon>
        <taxon>Actinopterygii</taxon>
        <taxon>Neopterygii</taxon>
        <taxon>Teleostei</taxon>
        <taxon>Ostariophysi</taxon>
        <taxon>Cypriniformes</taxon>
        <taxon>Danionidae</taxon>
        <taxon>Danioninae</taxon>
        <taxon>Danio</taxon>
    </lineage>
</organism>
<name>CP26A_DANRE</name>
<accession>P79739</accession>
<feature type="chain" id="PRO_0000051983" description="Cytochrome P450 26A1">
    <location>
        <begin position="1"/>
        <end position="492"/>
    </location>
</feature>
<feature type="binding site" description="axial binding residue" evidence="1">
    <location>
        <position position="438"/>
    </location>
    <ligand>
        <name>heme</name>
        <dbReference type="ChEBI" id="CHEBI:30413"/>
    </ligand>
    <ligandPart>
        <name>Fe</name>
        <dbReference type="ChEBI" id="CHEBI:18248"/>
    </ligandPart>
</feature>